<feature type="chain" id="PRO_0000379927" description="Peptidyl-prolyl cis-trans isomerase NIMA-interacting 4">
    <location>
        <begin position="1"/>
        <end position="127"/>
    </location>
</feature>
<feature type="domain" description="PpiC" evidence="2">
    <location>
        <begin position="31"/>
        <end position="125"/>
    </location>
</feature>
<feature type="region of interest" description="Disordered" evidence="3">
    <location>
        <begin position="1"/>
        <end position="33"/>
    </location>
</feature>
<proteinExistence type="evidence at transcript level"/>
<evidence type="ECO:0000250" key="1"/>
<evidence type="ECO:0000255" key="2">
    <source>
        <dbReference type="PROSITE-ProRule" id="PRU00278"/>
    </source>
</evidence>
<evidence type="ECO:0000256" key="3">
    <source>
        <dbReference type="SAM" id="MobiDB-lite"/>
    </source>
</evidence>
<evidence type="ECO:0000305" key="4"/>
<comment type="function">
    <text evidence="1">May be involved as a ribosomal RNA processing factor in ribosome biogenesis. Binds to DNA (By similarity).</text>
</comment>
<comment type="catalytic activity">
    <reaction>
        <text>[protein]-peptidylproline (omega=180) = [protein]-peptidylproline (omega=0)</text>
        <dbReference type="Rhea" id="RHEA:16237"/>
        <dbReference type="Rhea" id="RHEA-COMP:10747"/>
        <dbReference type="Rhea" id="RHEA-COMP:10748"/>
        <dbReference type="ChEBI" id="CHEBI:83833"/>
        <dbReference type="ChEBI" id="CHEBI:83834"/>
        <dbReference type="EC" id="5.2.1.8"/>
    </reaction>
</comment>
<comment type="subcellular location">
    <subcellularLocation>
        <location evidence="1">Nucleus</location>
        <location evidence="1">Nucleolus</location>
    </subcellularLocation>
    <subcellularLocation>
        <location evidence="1">Cytoplasm</location>
        <location evidence="1">Cytoskeleton</location>
        <location evidence="1">Spindle</location>
    </subcellularLocation>
    <subcellularLocation>
        <location evidence="1">Cytoplasm</location>
    </subcellularLocation>
</comment>
<comment type="similarity">
    <text evidence="4">Belongs to the PpiC/parvulin rotamase family. PIN4 subfamily.</text>
</comment>
<protein>
    <recommendedName>
        <fullName>Peptidyl-prolyl cis-trans isomerase NIMA-interacting 4</fullName>
        <ecNumber>5.2.1.8</ecNumber>
    </recommendedName>
    <alternativeName>
        <fullName>Parvulin-14</fullName>
        <shortName>Par14</shortName>
    </alternativeName>
    <alternativeName>
        <fullName>Peptidyl-prolyl cis-trans isomerase Pin4</fullName>
        <shortName>PPIase Pin4</shortName>
    </alternativeName>
    <alternativeName>
        <fullName>Rotamase Pin4</fullName>
    </alternativeName>
</protein>
<accession>Q6P4K8</accession>
<sequence>MPPKGKGGKGAKGGAASGEAADKKAQTPKGGNAVKVRHILCEKHGKVMEAMEKLKSGVRFSEVATQYSEDKARQGGDLGWMTRGSMVGPFQDAAFALPVSTMDKPVYTDPPVKTKFGYHIIMVEGRK</sequence>
<organism>
    <name type="scientific">Xenopus tropicalis</name>
    <name type="common">Western clawed frog</name>
    <name type="synonym">Silurana tropicalis</name>
    <dbReference type="NCBI Taxonomy" id="8364"/>
    <lineage>
        <taxon>Eukaryota</taxon>
        <taxon>Metazoa</taxon>
        <taxon>Chordata</taxon>
        <taxon>Craniata</taxon>
        <taxon>Vertebrata</taxon>
        <taxon>Euteleostomi</taxon>
        <taxon>Amphibia</taxon>
        <taxon>Batrachia</taxon>
        <taxon>Anura</taxon>
        <taxon>Pipoidea</taxon>
        <taxon>Pipidae</taxon>
        <taxon>Xenopodinae</taxon>
        <taxon>Xenopus</taxon>
        <taxon>Silurana</taxon>
    </lineage>
</organism>
<keyword id="KW-0963">Cytoplasm</keyword>
<keyword id="KW-0206">Cytoskeleton</keyword>
<keyword id="KW-0238">DNA-binding</keyword>
<keyword id="KW-0413">Isomerase</keyword>
<keyword id="KW-0539">Nucleus</keyword>
<keyword id="KW-1185">Reference proteome</keyword>
<keyword id="KW-0697">Rotamase</keyword>
<name>PIN4_XENTR</name>
<dbReference type="EC" id="5.2.1.8"/>
<dbReference type="EMBL" id="BC063359">
    <property type="protein sequence ID" value="AAH63359.1"/>
    <property type="molecule type" value="mRNA"/>
</dbReference>
<dbReference type="RefSeq" id="NP_989201.1">
    <property type="nucleotide sequence ID" value="NM_203870.1"/>
</dbReference>
<dbReference type="SMR" id="Q6P4K8"/>
<dbReference type="FunCoup" id="Q6P4K8">
    <property type="interactions" value="2216"/>
</dbReference>
<dbReference type="STRING" id="8364.ENSXETP00000005933"/>
<dbReference type="PaxDb" id="8364-ENSXETP00000048869"/>
<dbReference type="DNASU" id="394809"/>
<dbReference type="GeneID" id="394809"/>
<dbReference type="KEGG" id="xtr:394809"/>
<dbReference type="AGR" id="Xenbase:XB-GENE-1004487"/>
<dbReference type="CTD" id="5303"/>
<dbReference type="Xenbase" id="XB-GENE-1004487">
    <property type="gene designation" value="pin4"/>
</dbReference>
<dbReference type="eggNOG" id="KOG3258">
    <property type="taxonomic scope" value="Eukaryota"/>
</dbReference>
<dbReference type="HOGENOM" id="CLU_090028_2_1_1"/>
<dbReference type="InParanoid" id="Q6P4K8"/>
<dbReference type="OMA" id="NAINVRH"/>
<dbReference type="OrthoDB" id="1911748at2759"/>
<dbReference type="PhylomeDB" id="Q6P4K8"/>
<dbReference type="TreeFam" id="TF101102"/>
<dbReference type="Proteomes" id="UP000008143">
    <property type="component" value="Chromosome 8"/>
</dbReference>
<dbReference type="Bgee" id="ENSXETG00000022578">
    <property type="expression patterns" value="Expressed in skeletal muscle tissue and 12 other cell types or tissues"/>
</dbReference>
<dbReference type="GO" id="GO:0005737">
    <property type="term" value="C:cytoplasm"/>
    <property type="evidence" value="ECO:0007669"/>
    <property type="project" value="UniProtKB-SubCell"/>
</dbReference>
<dbReference type="GO" id="GO:0005730">
    <property type="term" value="C:nucleolus"/>
    <property type="evidence" value="ECO:0007669"/>
    <property type="project" value="UniProtKB-SubCell"/>
</dbReference>
<dbReference type="GO" id="GO:0005819">
    <property type="term" value="C:spindle"/>
    <property type="evidence" value="ECO:0007669"/>
    <property type="project" value="UniProtKB-SubCell"/>
</dbReference>
<dbReference type="GO" id="GO:0003677">
    <property type="term" value="F:DNA binding"/>
    <property type="evidence" value="ECO:0007669"/>
    <property type="project" value="UniProtKB-KW"/>
</dbReference>
<dbReference type="GO" id="GO:0003755">
    <property type="term" value="F:peptidyl-prolyl cis-trans isomerase activity"/>
    <property type="evidence" value="ECO:0007669"/>
    <property type="project" value="UniProtKB-KW"/>
</dbReference>
<dbReference type="GO" id="GO:0006364">
    <property type="term" value="P:rRNA processing"/>
    <property type="evidence" value="ECO:0007669"/>
    <property type="project" value="InterPro"/>
</dbReference>
<dbReference type="FunFam" id="3.10.50.40:FF:000015">
    <property type="entry name" value="Peptidyl-prolyl cis-trans isomerase"/>
    <property type="match status" value="1"/>
</dbReference>
<dbReference type="Gene3D" id="3.10.50.40">
    <property type="match status" value="1"/>
</dbReference>
<dbReference type="InterPro" id="IPR043323">
    <property type="entry name" value="PIN4"/>
</dbReference>
<dbReference type="InterPro" id="IPR046357">
    <property type="entry name" value="PPIase_dom_sf"/>
</dbReference>
<dbReference type="InterPro" id="IPR000297">
    <property type="entry name" value="PPIase_PpiC"/>
</dbReference>
<dbReference type="PANTHER" id="PTHR45995">
    <property type="match status" value="1"/>
</dbReference>
<dbReference type="Pfam" id="PF13616">
    <property type="entry name" value="Rotamase_3"/>
    <property type="match status" value="1"/>
</dbReference>
<dbReference type="SUPFAM" id="SSF54534">
    <property type="entry name" value="FKBP-like"/>
    <property type="match status" value="1"/>
</dbReference>
<dbReference type="PROSITE" id="PS50198">
    <property type="entry name" value="PPIC_PPIASE_2"/>
    <property type="match status" value="1"/>
</dbReference>
<gene>
    <name type="primary">pin4</name>
</gene>
<reference key="1">
    <citation type="submission" date="2003-12" db="EMBL/GenBank/DDBJ databases">
        <authorList>
            <consortium name="NIH - Xenopus Gene Collection (XGC) project"/>
        </authorList>
    </citation>
    <scope>NUCLEOTIDE SEQUENCE [LARGE SCALE MRNA]</scope>
    <source>
        <tissue>Embryo</tissue>
    </source>
</reference>